<gene>
    <name evidence="1" type="primary">queC</name>
    <name type="ordered locus">WS1657</name>
</gene>
<reference key="1">
    <citation type="journal article" date="2003" name="Proc. Natl. Acad. Sci. U.S.A.">
        <title>Complete genome sequence and analysis of Wolinella succinogenes.</title>
        <authorList>
            <person name="Baar C."/>
            <person name="Eppinger M."/>
            <person name="Raddatz G."/>
            <person name="Simon J."/>
            <person name="Lanz C."/>
            <person name="Klimmek O."/>
            <person name="Nandakumar R."/>
            <person name="Gross R."/>
            <person name="Rosinus A."/>
            <person name="Keller H."/>
            <person name="Jagtap P."/>
            <person name="Linke B."/>
            <person name="Meyer F."/>
            <person name="Lederer H."/>
            <person name="Schuster S.C."/>
        </authorList>
    </citation>
    <scope>NUCLEOTIDE SEQUENCE [LARGE SCALE GENOMIC DNA]</scope>
    <source>
        <strain>ATCC 29543 / DSM 1740 / CCUG 13145 / JCM 31913 / LMG 7466 / NCTC 11488 / FDC 602W</strain>
    </source>
</reference>
<protein>
    <recommendedName>
        <fullName evidence="1">7-cyano-7-deazaguanine synthase</fullName>
        <ecNumber evidence="1">6.3.4.20</ecNumber>
    </recommendedName>
    <alternativeName>
        <fullName evidence="1">7-cyano-7-carbaguanine synthase</fullName>
    </alternativeName>
    <alternativeName>
        <fullName evidence="1">PreQ(0) synthase</fullName>
    </alternativeName>
    <alternativeName>
        <fullName evidence="1">Queuosine biosynthesis protein QueC</fullName>
    </alternativeName>
</protein>
<organism>
    <name type="scientific">Wolinella succinogenes (strain ATCC 29543 / DSM 1740 / CCUG 13145 / JCM 31913 / LMG 7466 / NCTC 11488 / FDC 602W)</name>
    <name type="common">Vibrio succinogenes</name>
    <dbReference type="NCBI Taxonomy" id="273121"/>
    <lineage>
        <taxon>Bacteria</taxon>
        <taxon>Pseudomonadati</taxon>
        <taxon>Campylobacterota</taxon>
        <taxon>Epsilonproteobacteria</taxon>
        <taxon>Campylobacterales</taxon>
        <taxon>Helicobacteraceae</taxon>
        <taxon>Wolinella</taxon>
    </lineage>
</organism>
<proteinExistence type="inferred from homology"/>
<feature type="chain" id="PRO_0000246960" description="7-cyano-7-deazaguanine synthase">
    <location>
        <begin position="1"/>
        <end position="233"/>
    </location>
</feature>
<feature type="binding site" evidence="1">
    <location>
        <begin position="18"/>
        <end position="28"/>
    </location>
    <ligand>
        <name>ATP</name>
        <dbReference type="ChEBI" id="CHEBI:30616"/>
    </ligand>
</feature>
<feature type="binding site" evidence="1">
    <location>
        <position position="198"/>
    </location>
    <ligand>
        <name>Zn(2+)</name>
        <dbReference type="ChEBI" id="CHEBI:29105"/>
    </ligand>
</feature>
<feature type="binding site" evidence="1">
    <location>
        <position position="213"/>
    </location>
    <ligand>
        <name>Zn(2+)</name>
        <dbReference type="ChEBI" id="CHEBI:29105"/>
    </ligand>
</feature>
<feature type="binding site" evidence="1">
    <location>
        <position position="216"/>
    </location>
    <ligand>
        <name>Zn(2+)</name>
        <dbReference type="ChEBI" id="CHEBI:29105"/>
    </ligand>
</feature>
<feature type="binding site" evidence="1">
    <location>
        <position position="219"/>
    </location>
    <ligand>
        <name>Zn(2+)</name>
        <dbReference type="ChEBI" id="CHEBI:29105"/>
    </ligand>
</feature>
<dbReference type="EC" id="6.3.4.20" evidence="1"/>
<dbReference type="EMBL" id="BX571661">
    <property type="protein sequence ID" value="CAE10688.1"/>
    <property type="molecule type" value="Genomic_DNA"/>
</dbReference>
<dbReference type="RefSeq" id="WP_011139472.1">
    <property type="nucleotide sequence ID" value="NC_005090.1"/>
</dbReference>
<dbReference type="SMR" id="Q7M8H4"/>
<dbReference type="STRING" id="273121.WS1657"/>
<dbReference type="KEGG" id="wsu:WS1657"/>
<dbReference type="eggNOG" id="COG0603">
    <property type="taxonomic scope" value="Bacteria"/>
</dbReference>
<dbReference type="HOGENOM" id="CLU_081854_0_0_7"/>
<dbReference type="UniPathway" id="UPA00391"/>
<dbReference type="Proteomes" id="UP000000422">
    <property type="component" value="Chromosome"/>
</dbReference>
<dbReference type="GO" id="GO:0005524">
    <property type="term" value="F:ATP binding"/>
    <property type="evidence" value="ECO:0007669"/>
    <property type="project" value="UniProtKB-UniRule"/>
</dbReference>
<dbReference type="GO" id="GO:0016879">
    <property type="term" value="F:ligase activity, forming carbon-nitrogen bonds"/>
    <property type="evidence" value="ECO:0007669"/>
    <property type="project" value="UniProtKB-UniRule"/>
</dbReference>
<dbReference type="GO" id="GO:0008270">
    <property type="term" value="F:zinc ion binding"/>
    <property type="evidence" value="ECO:0007669"/>
    <property type="project" value="UniProtKB-UniRule"/>
</dbReference>
<dbReference type="GO" id="GO:0008616">
    <property type="term" value="P:queuosine biosynthetic process"/>
    <property type="evidence" value="ECO:0007669"/>
    <property type="project" value="UniProtKB-UniRule"/>
</dbReference>
<dbReference type="CDD" id="cd01995">
    <property type="entry name" value="QueC-like"/>
    <property type="match status" value="1"/>
</dbReference>
<dbReference type="Gene3D" id="3.40.50.620">
    <property type="entry name" value="HUPs"/>
    <property type="match status" value="1"/>
</dbReference>
<dbReference type="HAMAP" id="MF_01633">
    <property type="entry name" value="QueC"/>
    <property type="match status" value="1"/>
</dbReference>
<dbReference type="InterPro" id="IPR018317">
    <property type="entry name" value="QueC"/>
</dbReference>
<dbReference type="InterPro" id="IPR014729">
    <property type="entry name" value="Rossmann-like_a/b/a_fold"/>
</dbReference>
<dbReference type="NCBIfam" id="TIGR00364">
    <property type="entry name" value="7-cyano-7-deazaguanine synthase QueC"/>
    <property type="match status" value="1"/>
</dbReference>
<dbReference type="PANTHER" id="PTHR42914">
    <property type="entry name" value="7-CYANO-7-DEAZAGUANINE SYNTHASE"/>
    <property type="match status" value="1"/>
</dbReference>
<dbReference type="PANTHER" id="PTHR42914:SF1">
    <property type="entry name" value="7-CYANO-7-DEAZAGUANINE SYNTHASE"/>
    <property type="match status" value="1"/>
</dbReference>
<dbReference type="Pfam" id="PF06508">
    <property type="entry name" value="QueC"/>
    <property type="match status" value="1"/>
</dbReference>
<dbReference type="PIRSF" id="PIRSF006293">
    <property type="entry name" value="ExsB"/>
    <property type="match status" value="1"/>
</dbReference>
<dbReference type="SUPFAM" id="SSF52402">
    <property type="entry name" value="Adenine nucleotide alpha hydrolases-like"/>
    <property type="match status" value="1"/>
</dbReference>
<sequence length="233" mass="26135">MTSLTPSALSSSHALVVFSGGQDSTTCLGWAIKHFKSVEAITFDYGQRHRIEIEQSRLIAQKLGIKQFILEFDLFSKLGDSALLETSSDLKASPHRTKPHLPASFVPNRNALFFTLAHAYAQREGLTHIITGISEADYSGYPDCREEFITHLERTLNLGSDSSILFAYPLLHRNKAQTFALAKECGVLDLVLEESHTCYNGDRSHRYEWGYGCKECPACGLREKGWREYQASL</sequence>
<evidence type="ECO:0000255" key="1">
    <source>
        <dbReference type="HAMAP-Rule" id="MF_01633"/>
    </source>
</evidence>
<comment type="function">
    <text evidence="1">Catalyzes the ATP-dependent conversion of 7-carboxy-7-deazaguanine (CDG) to 7-cyano-7-deazaguanine (preQ(0)).</text>
</comment>
<comment type="catalytic activity">
    <reaction evidence="1">
        <text>7-carboxy-7-deazaguanine + NH4(+) + ATP = 7-cyano-7-deazaguanine + ADP + phosphate + H2O + H(+)</text>
        <dbReference type="Rhea" id="RHEA:27982"/>
        <dbReference type="ChEBI" id="CHEBI:15377"/>
        <dbReference type="ChEBI" id="CHEBI:15378"/>
        <dbReference type="ChEBI" id="CHEBI:28938"/>
        <dbReference type="ChEBI" id="CHEBI:30616"/>
        <dbReference type="ChEBI" id="CHEBI:43474"/>
        <dbReference type="ChEBI" id="CHEBI:45075"/>
        <dbReference type="ChEBI" id="CHEBI:61036"/>
        <dbReference type="ChEBI" id="CHEBI:456216"/>
        <dbReference type="EC" id="6.3.4.20"/>
    </reaction>
</comment>
<comment type="cofactor">
    <cofactor evidence="1">
        <name>Zn(2+)</name>
        <dbReference type="ChEBI" id="CHEBI:29105"/>
    </cofactor>
    <text evidence="1">Binds 1 zinc ion per subunit.</text>
</comment>
<comment type="pathway">
    <text evidence="1">Purine metabolism; 7-cyano-7-deazaguanine biosynthesis.</text>
</comment>
<comment type="similarity">
    <text evidence="1">Belongs to the QueC family.</text>
</comment>
<name>QUEC_WOLSU</name>
<accession>Q7M8H4</accession>
<keyword id="KW-0067">ATP-binding</keyword>
<keyword id="KW-0436">Ligase</keyword>
<keyword id="KW-0479">Metal-binding</keyword>
<keyword id="KW-0547">Nucleotide-binding</keyword>
<keyword id="KW-0671">Queuosine biosynthesis</keyword>
<keyword id="KW-1185">Reference proteome</keyword>
<keyword id="KW-0862">Zinc</keyword>